<dbReference type="EMBL" id="AB097932">
    <property type="status" value="NOT_ANNOTATED_CDS"/>
    <property type="molecule type" value="Genomic_DNA"/>
</dbReference>
<dbReference type="EMBL" id="AB097933">
    <property type="status" value="NOT_ANNOTATED_CDS"/>
    <property type="molecule type" value="Genomic_DNA"/>
</dbReference>
<dbReference type="EMBL" id="DQ008354">
    <property type="protein sequence ID" value="AAY57622.1"/>
    <property type="molecule type" value="Genomic_DNA"/>
</dbReference>
<dbReference type="EMBL" id="DQ008355">
    <property type="protein sequence ID" value="AAY57693.1"/>
    <property type="molecule type" value="Genomic_DNA"/>
</dbReference>
<dbReference type="RefSeq" id="NP_040126.1">
    <property type="nucleotide sequence ID" value="NC_001348.1"/>
</dbReference>
<dbReference type="IntAct" id="Q4JQX2">
    <property type="interactions" value="15"/>
</dbReference>
<dbReference type="DNASU" id="1487681"/>
<dbReference type="GeneID" id="1487681"/>
<dbReference type="KEGG" id="vg:1487681"/>
<dbReference type="Proteomes" id="UP000002603">
    <property type="component" value="Genome"/>
</dbReference>
<dbReference type="Proteomes" id="UP000008504">
    <property type="component" value="Genome"/>
</dbReference>
<dbReference type="Proteomes" id="UP000008505">
    <property type="component" value="Genome"/>
</dbReference>
<dbReference type="Proteomes" id="UP000008506">
    <property type="component" value="Genome"/>
</dbReference>
<dbReference type="GO" id="GO:0044204">
    <property type="term" value="C:host cell nuclear matrix"/>
    <property type="evidence" value="ECO:0007669"/>
    <property type="project" value="UniProtKB-SubCell"/>
</dbReference>
<dbReference type="GO" id="GO:0019033">
    <property type="term" value="C:viral tegument"/>
    <property type="evidence" value="ECO:0007669"/>
    <property type="project" value="UniProtKB-SubCell"/>
</dbReference>
<dbReference type="GO" id="GO:0019058">
    <property type="term" value="P:viral life cycle"/>
    <property type="evidence" value="ECO:0007669"/>
    <property type="project" value="InterPro"/>
</dbReference>
<dbReference type="InterPro" id="IPR007622">
    <property type="entry name" value="Herpes_UL55"/>
</dbReference>
<dbReference type="Pfam" id="PF04537">
    <property type="entry name" value="Herpes_UL55"/>
    <property type="match status" value="1"/>
</dbReference>
<proteinExistence type="inferred from homology"/>
<feature type="chain" id="PRO_0000385497" description="Tegument protein UL55 homolog">
    <location>
        <begin position="1"/>
        <end position="179"/>
    </location>
</feature>
<evidence type="ECO:0000250" key="1"/>
<evidence type="ECO:0000305" key="2"/>
<organism>
    <name type="scientific">Varicella-zoster virus (strain Oka vaccine)</name>
    <name type="common">HHV-3</name>
    <name type="synonym">Human herpesvirus 3</name>
    <dbReference type="NCBI Taxonomy" id="341980"/>
    <lineage>
        <taxon>Viruses</taxon>
        <taxon>Duplodnaviria</taxon>
        <taxon>Heunggongvirae</taxon>
        <taxon>Peploviricota</taxon>
        <taxon>Herviviricetes</taxon>
        <taxon>Herpesvirales</taxon>
        <taxon>Orthoherpesviridae</taxon>
        <taxon>Alphaherpesvirinae</taxon>
        <taxon>Varicellovirus</taxon>
        <taxon>Varicellovirus humanalpha3</taxon>
        <taxon>Human herpesvirus 3</taxon>
    </lineage>
</organism>
<sequence>MDTTGASESSQPIRVNLKPDPLASFTQVIPPLALETTWTCPANSHAPTPSPLYGVKRLCALRATCGRADDLHAFLIGLGRRDKPSESPMYVDLQPFCSLLNSQRLLPEMANYNTLCDAPFSAATQQMMLESGQLGVHLAAIGYHCHCKSPFSAECWTGASEAYDHVVCGGKARAAVGGL</sequence>
<name>TEG6_VZVO</name>
<reference key="1">
    <citation type="journal article" date="2002" name="J. Virol.">
        <title>Comparison of the complete DNA sequences of the Oka varicella vaccine and its parental virus.</title>
        <authorList>
            <person name="Gomi Y."/>
            <person name="Sunamachi H."/>
            <person name="Mori Y."/>
            <person name="Nagaike K."/>
            <person name="Takahashi M."/>
            <person name="Yamanishi K."/>
        </authorList>
    </citation>
    <scope>NUCLEOTIDE SEQUENCE [LARGE SCALE GENOMIC DNA]</scope>
    <source>
        <strain>Isolate Human/Japan/P-Oka/1970</strain>
        <strain>Oka varicella vaccine Biken (V-Oka-Biken)</strain>
    </source>
</reference>
<reference key="2">
    <citation type="journal article" date="2008" name="J. Virol.">
        <title>Complete DNA sequences of two oka strain varicella-zoster virus genomes.</title>
        <authorList>
            <person name="Tillieux S.L."/>
            <person name="Halsey W.S."/>
            <person name="Thomas E.S."/>
            <person name="Voycik J.J."/>
            <person name="Sathe G.M."/>
            <person name="Vassilev V."/>
        </authorList>
    </citation>
    <scope>NUCLEOTIDE SEQUENCE [LARGE SCALE GENOMIC DNA]</scope>
    <source>
        <strain>Oka varicella vaccine VarilRix (V-Oka-GSK)</strain>
        <strain>Oka varicella vaccine Varivax (V-Oka-Merck)</strain>
    </source>
</reference>
<accession>Q4JQX2</accession>
<keyword id="KW-1048">Host nucleus</keyword>
<keyword id="KW-0946">Virion</keyword>
<keyword id="KW-0920">Virion tegument</keyword>
<protein>
    <recommendedName>
        <fullName>Tegument protein UL55 homolog</fullName>
    </recommendedName>
</protein>
<organismHost>
    <name type="scientific">Homo sapiens</name>
    <name type="common">Human</name>
    <dbReference type="NCBI Taxonomy" id="9606"/>
</organismHost>
<gene>
    <name type="ORF">ORF3</name>
</gene>
<comment type="subcellular location">
    <subcellularLocation>
        <location evidence="1">Virion tegument</location>
    </subcellularLocation>
    <subcellularLocation>
        <location evidence="1">Host nucleus matrix</location>
    </subcellularLocation>
</comment>
<comment type="similarity">
    <text evidence="2">Belongs to the alphaherpesvirinae HHV-1 UL55 family.</text>
</comment>